<name>MURB_CLOBM</name>
<protein>
    <recommendedName>
        <fullName evidence="1">UDP-N-acetylenolpyruvoylglucosamine reductase</fullName>
        <ecNumber evidence="1">1.3.1.98</ecNumber>
    </recommendedName>
    <alternativeName>
        <fullName evidence="1">UDP-N-acetylmuramate dehydrogenase</fullName>
    </alternativeName>
</protein>
<comment type="function">
    <text evidence="1">Cell wall formation.</text>
</comment>
<comment type="catalytic activity">
    <reaction evidence="1">
        <text>UDP-N-acetyl-alpha-D-muramate + NADP(+) = UDP-N-acetyl-3-O-(1-carboxyvinyl)-alpha-D-glucosamine + NADPH + H(+)</text>
        <dbReference type="Rhea" id="RHEA:12248"/>
        <dbReference type="ChEBI" id="CHEBI:15378"/>
        <dbReference type="ChEBI" id="CHEBI:57783"/>
        <dbReference type="ChEBI" id="CHEBI:58349"/>
        <dbReference type="ChEBI" id="CHEBI:68483"/>
        <dbReference type="ChEBI" id="CHEBI:70757"/>
        <dbReference type="EC" id="1.3.1.98"/>
    </reaction>
</comment>
<comment type="cofactor">
    <cofactor evidence="1">
        <name>FAD</name>
        <dbReference type="ChEBI" id="CHEBI:57692"/>
    </cofactor>
</comment>
<comment type="pathway">
    <text evidence="1">Cell wall biogenesis; peptidoglycan biosynthesis.</text>
</comment>
<comment type="subcellular location">
    <subcellularLocation>
        <location evidence="1">Cytoplasm</location>
    </subcellularLocation>
</comment>
<comment type="similarity">
    <text evidence="1">Belongs to the MurB family.</text>
</comment>
<reference key="1">
    <citation type="journal article" date="2007" name="PLoS ONE">
        <title>Analysis of the neurotoxin complex genes in Clostridium botulinum A1-A4 and B1 strains: BoNT/A3, /Ba4 and /B1 clusters are located within plasmids.</title>
        <authorList>
            <person name="Smith T.J."/>
            <person name="Hill K.K."/>
            <person name="Foley B.T."/>
            <person name="Detter J.C."/>
            <person name="Munk A.C."/>
            <person name="Bruce D.C."/>
            <person name="Doggett N.A."/>
            <person name="Smith L.A."/>
            <person name="Marks J.D."/>
            <person name="Xie G."/>
            <person name="Brettin T.S."/>
        </authorList>
    </citation>
    <scope>NUCLEOTIDE SEQUENCE [LARGE SCALE GENOMIC DNA]</scope>
    <source>
        <strain>Loch Maree / Type A3</strain>
    </source>
</reference>
<gene>
    <name evidence="1" type="primary">murB</name>
    <name type="ordered locus">CLK_2810</name>
</gene>
<feature type="chain" id="PRO_1000191416" description="UDP-N-acetylenolpyruvoylglucosamine reductase">
    <location>
        <begin position="1"/>
        <end position="306"/>
    </location>
</feature>
<feature type="domain" description="FAD-binding PCMH-type" evidence="1">
    <location>
        <begin position="34"/>
        <end position="198"/>
    </location>
</feature>
<feature type="active site" evidence="1">
    <location>
        <position position="177"/>
    </location>
</feature>
<feature type="active site" description="Proton donor" evidence="1">
    <location>
        <position position="227"/>
    </location>
</feature>
<feature type="active site" evidence="1">
    <location>
        <position position="297"/>
    </location>
</feature>
<sequence>MNQYKNFIMQFEDIVGNNNVLIDEPMKKHTSFKVGGPADLLITPTTLEQVKDSIILCRNNSIPYYIIGNGSNLLVRDGGIRGVVIKFLKLGDIKVEGDRVIAQSGAPLTNICNEALKSNLGGLEFACGIPGSVGGAVTMNAGAYNGEISQVIESAKVIDKDGNVFLLNKEQLDLGYRMSAIQKYHYIVLEVTFKLHNSEYDTIKNRIMDLNRRRTEKQPLEYPSAGSTFKRPEGHFAAKLIEDTGLKGESIGGAQVSEKHSGFIINKGGATAGDILNLIEFVQNKVMEKFQVDLHTEVRIIGEENN</sequence>
<proteinExistence type="inferred from homology"/>
<dbReference type="EC" id="1.3.1.98" evidence="1"/>
<dbReference type="EMBL" id="CP000962">
    <property type="protein sequence ID" value="ACA55200.1"/>
    <property type="molecule type" value="Genomic_DNA"/>
</dbReference>
<dbReference type="RefSeq" id="WP_003357383.1">
    <property type="nucleotide sequence ID" value="NC_010520.1"/>
</dbReference>
<dbReference type="SMR" id="B1L271"/>
<dbReference type="KEGG" id="cbl:CLK_2810"/>
<dbReference type="HOGENOM" id="CLU_035304_1_1_9"/>
<dbReference type="UniPathway" id="UPA00219"/>
<dbReference type="GO" id="GO:0005829">
    <property type="term" value="C:cytosol"/>
    <property type="evidence" value="ECO:0007669"/>
    <property type="project" value="TreeGrafter"/>
</dbReference>
<dbReference type="GO" id="GO:0071949">
    <property type="term" value="F:FAD binding"/>
    <property type="evidence" value="ECO:0007669"/>
    <property type="project" value="InterPro"/>
</dbReference>
<dbReference type="GO" id="GO:0008762">
    <property type="term" value="F:UDP-N-acetylmuramate dehydrogenase activity"/>
    <property type="evidence" value="ECO:0007669"/>
    <property type="project" value="UniProtKB-UniRule"/>
</dbReference>
<dbReference type="GO" id="GO:0051301">
    <property type="term" value="P:cell division"/>
    <property type="evidence" value="ECO:0007669"/>
    <property type="project" value="UniProtKB-KW"/>
</dbReference>
<dbReference type="GO" id="GO:0071555">
    <property type="term" value="P:cell wall organization"/>
    <property type="evidence" value="ECO:0007669"/>
    <property type="project" value="UniProtKB-KW"/>
</dbReference>
<dbReference type="GO" id="GO:0009252">
    <property type="term" value="P:peptidoglycan biosynthetic process"/>
    <property type="evidence" value="ECO:0007669"/>
    <property type="project" value="UniProtKB-UniRule"/>
</dbReference>
<dbReference type="GO" id="GO:0008360">
    <property type="term" value="P:regulation of cell shape"/>
    <property type="evidence" value="ECO:0007669"/>
    <property type="project" value="UniProtKB-KW"/>
</dbReference>
<dbReference type="Gene3D" id="3.30.465.10">
    <property type="match status" value="1"/>
</dbReference>
<dbReference type="Gene3D" id="3.90.78.10">
    <property type="entry name" value="UDP-N-acetylenolpyruvoylglucosamine reductase, C-terminal domain"/>
    <property type="match status" value="1"/>
</dbReference>
<dbReference type="Gene3D" id="3.30.43.10">
    <property type="entry name" value="Uridine Diphospho-n-acetylenolpyruvylglucosamine Reductase, domain 2"/>
    <property type="match status" value="1"/>
</dbReference>
<dbReference type="HAMAP" id="MF_00037">
    <property type="entry name" value="MurB"/>
    <property type="match status" value="1"/>
</dbReference>
<dbReference type="InterPro" id="IPR016166">
    <property type="entry name" value="FAD-bd_PCMH"/>
</dbReference>
<dbReference type="InterPro" id="IPR036318">
    <property type="entry name" value="FAD-bd_PCMH-like_sf"/>
</dbReference>
<dbReference type="InterPro" id="IPR016167">
    <property type="entry name" value="FAD-bd_PCMH_sub1"/>
</dbReference>
<dbReference type="InterPro" id="IPR016169">
    <property type="entry name" value="FAD-bd_PCMH_sub2"/>
</dbReference>
<dbReference type="InterPro" id="IPR003170">
    <property type="entry name" value="MurB"/>
</dbReference>
<dbReference type="InterPro" id="IPR011601">
    <property type="entry name" value="MurB_C"/>
</dbReference>
<dbReference type="InterPro" id="IPR036635">
    <property type="entry name" value="MurB_C_sf"/>
</dbReference>
<dbReference type="InterPro" id="IPR006094">
    <property type="entry name" value="Oxid_FAD_bind_N"/>
</dbReference>
<dbReference type="NCBIfam" id="TIGR00179">
    <property type="entry name" value="murB"/>
    <property type="match status" value="1"/>
</dbReference>
<dbReference type="NCBIfam" id="NF010480">
    <property type="entry name" value="PRK13905.1"/>
    <property type="match status" value="1"/>
</dbReference>
<dbReference type="PANTHER" id="PTHR21071">
    <property type="entry name" value="UDP-N-ACETYLENOLPYRUVOYLGLUCOSAMINE REDUCTASE"/>
    <property type="match status" value="1"/>
</dbReference>
<dbReference type="PANTHER" id="PTHR21071:SF4">
    <property type="entry name" value="UDP-N-ACETYLENOLPYRUVOYLGLUCOSAMINE REDUCTASE"/>
    <property type="match status" value="1"/>
</dbReference>
<dbReference type="Pfam" id="PF01565">
    <property type="entry name" value="FAD_binding_4"/>
    <property type="match status" value="1"/>
</dbReference>
<dbReference type="Pfam" id="PF02873">
    <property type="entry name" value="MurB_C"/>
    <property type="match status" value="1"/>
</dbReference>
<dbReference type="SUPFAM" id="SSF56176">
    <property type="entry name" value="FAD-binding/transporter-associated domain-like"/>
    <property type="match status" value="1"/>
</dbReference>
<dbReference type="SUPFAM" id="SSF56194">
    <property type="entry name" value="Uridine diphospho-N-Acetylenolpyruvylglucosamine reductase, MurB, C-terminal domain"/>
    <property type="match status" value="1"/>
</dbReference>
<dbReference type="PROSITE" id="PS51387">
    <property type="entry name" value="FAD_PCMH"/>
    <property type="match status" value="1"/>
</dbReference>
<accession>B1L271</accession>
<organism>
    <name type="scientific">Clostridium botulinum (strain Loch Maree / Type A3)</name>
    <dbReference type="NCBI Taxonomy" id="498214"/>
    <lineage>
        <taxon>Bacteria</taxon>
        <taxon>Bacillati</taxon>
        <taxon>Bacillota</taxon>
        <taxon>Clostridia</taxon>
        <taxon>Eubacteriales</taxon>
        <taxon>Clostridiaceae</taxon>
        <taxon>Clostridium</taxon>
    </lineage>
</organism>
<keyword id="KW-0131">Cell cycle</keyword>
<keyword id="KW-0132">Cell division</keyword>
<keyword id="KW-0133">Cell shape</keyword>
<keyword id="KW-0961">Cell wall biogenesis/degradation</keyword>
<keyword id="KW-0963">Cytoplasm</keyword>
<keyword id="KW-0274">FAD</keyword>
<keyword id="KW-0285">Flavoprotein</keyword>
<keyword id="KW-0521">NADP</keyword>
<keyword id="KW-0560">Oxidoreductase</keyword>
<keyword id="KW-0573">Peptidoglycan synthesis</keyword>
<evidence type="ECO:0000255" key="1">
    <source>
        <dbReference type="HAMAP-Rule" id="MF_00037"/>
    </source>
</evidence>